<accession>B4SWS7</accession>
<comment type="function">
    <text evidence="1">Nucleotide-binding protein.</text>
</comment>
<comment type="similarity">
    <text evidence="1">Belongs to the YajQ family.</text>
</comment>
<keyword id="KW-0547">Nucleotide-binding</keyword>
<reference key="1">
    <citation type="journal article" date="2011" name="J. Bacteriol.">
        <title>Comparative genomics of 28 Salmonella enterica isolates: evidence for CRISPR-mediated adaptive sublineage evolution.</title>
        <authorList>
            <person name="Fricke W.F."/>
            <person name="Mammel M.K."/>
            <person name="McDermott P.F."/>
            <person name="Tartera C."/>
            <person name="White D.G."/>
            <person name="Leclerc J.E."/>
            <person name="Ravel J."/>
            <person name="Cebula T.A."/>
        </authorList>
    </citation>
    <scope>NUCLEOTIDE SEQUENCE [LARGE SCALE GENOMIC DNA]</scope>
    <source>
        <strain>SL254</strain>
    </source>
</reference>
<organism>
    <name type="scientific">Salmonella newport (strain SL254)</name>
    <dbReference type="NCBI Taxonomy" id="423368"/>
    <lineage>
        <taxon>Bacteria</taxon>
        <taxon>Pseudomonadati</taxon>
        <taxon>Pseudomonadota</taxon>
        <taxon>Gammaproteobacteria</taxon>
        <taxon>Enterobacterales</taxon>
        <taxon>Enterobacteriaceae</taxon>
        <taxon>Salmonella</taxon>
    </lineage>
</organism>
<evidence type="ECO:0000255" key="1">
    <source>
        <dbReference type="HAMAP-Rule" id="MF_00632"/>
    </source>
</evidence>
<protein>
    <recommendedName>
        <fullName evidence="1">Nucleotide-binding protein YajQ</fullName>
    </recommendedName>
</protein>
<sequence length="163" mass="18319">MPSFDIVSEVDLQEARNGVDNAVREVESRFDFRGVEATIELNDANKTIKVLSESDFQVNQLLDILRAKLLKRGIEGASLDVPDEFVHSGKTWYVEAKLKQGIESAVQKKIVKLIKDSKLKVQAQIQGEEIRVTGKSRDDLQSVMALVRGGDLGQPFQFKNFRD</sequence>
<feature type="chain" id="PRO_1000130648" description="Nucleotide-binding protein YajQ">
    <location>
        <begin position="1"/>
        <end position="163"/>
    </location>
</feature>
<gene>
    <name evidence="1" type="primary">yajQ</name>
    <name type="ordered locus">SNSL254_A0482</name>
</gene>
<proteinExistence type="inferred from homology"/>
<dbReference type="EMBL" id="CP001113">
    <property type="protein sequence ID" value="ACF61370.1"/>
    <property type="molecule type" value="Genomic_DNA"/>
</dbReference>
<dbReference type="RefSeq" id="WP_001138913.1">
    <property type="nucleotide sequence ID" value="NZ_CCMR01000003.1"/>
</dbReference>
<dbReference type="SMR" id="B4SWS7"/>
<dbReference type="KEGG" id="see:SNSL254_A0482"/>
<dbReference type="HOGENOM" id="CLU_099839_1_0_6"/>
<dbReference type="Proteomes" id="UP000008824">
    <property type="component" value="Chromosome"/>
</dbReference>
<dbReference type="GO" id="GO:0005829">
    <property type="term" value="C:cytosol"/>
    <property type="evidence" value="ECO:0007669"/>
    <property type="project" value="TreeGrafter"/>
</dbReference>
<dbReference type="GO" id="GO:0000166">
    <property type="term" value="F:nucleotide binding"/>
    <property type="evidence" value="ECO:0007669"/>
    <property type="project" value="TreeGrafter"/>
</dbReference>
<dbReference type="CDD" id="cd11740">
    <property type="entry name" value="YajQ_like"/>
    <property type="match status" value="1"/>
</dbReference>
<dbReference type="FunFam" id="3.30.70.860:FF:000001">
    <property type="entry name" value="UPF0234 protein YajQ"/>
    <property type="match status" value="1"/>
</dbReference>
<dbReference type="FunFam" id="3.30.70.990:FF:000001">
    <property type="entry name" value="UPF0234 protein YajQ"/>
    <property type="match status" value="1"/>
</dbReference>
<dbReference type="Gene3D" id="3.30.70.860">
    <property type="match status" value="1"/>
</dbReference>
<dbReference type="Gene3D" id="3.30.70.990">
    <property type="entry name" value="YajQ-like, domain 2"/>
    <property type="match status" value="1"/>
</dbReference>
<dbReference type="HAMAP" id="MF_00632">
    <property type="entry name" value="YajQ"/>
    <property type="match status" value="1"/>
</dbReference>
<dbReference type="InterPro" id="IPR007551">
    <property type="entry name" value="DUF520"/>
</dbReference>
<dbReference type="InterPro" id="IPR035571">
    <property type="entry name" value="UPF0234-like_C"/>
</dbReference>
<dbReference type="InterPro" id="IPR035570">
    <property type="entry name" value="UPF0234_N"/>
</dbReference>
<dbReference type="InterPro" id="IPR036183">
    <property type="entry name" value="YajQ-like_sf"/>
</dbReference>
<dbReference type="NCBIfam" id="NF003819">
    <property type="entry name" value="PRK05412.1"/>
    <property type="match status" value="1"/>
</dbReference>
<dbReference type="PANTHER" id="PTHR30476">
    <property type="entry name" value="UPF0234 PROTEIN YAJQ"/>
    <property type="match status" value="1"/>
</dbReference>
<dbReference type="PANTHER" id="PTHR30476:SF0">
    <property type="entry name" value="UPF0234 PROTEIN YAJQ"/>
    <property type="match status" value="1"/>
</dbReference>
<dbReference type="Pfam" id="PF04461">
    <property type="entry name" value="DUF520"/>
    <property type="match status" value="1"/>
</dbReference>
<dbReference type="SUPFAM" id="SSF89963">
    <property type="entry name" value="YajQ-like"/>
    <property type="match status" value="2"/>
</dbReference>
<name>YAJQ_SALNS</name>